<reference key="1">
    <citation type="journal article" date="2001" name="Genome Res.">
        <title>The complete genome sequence of the lactic acid bacterium Lactococcus lactis ssp. lactis IL1403.</title>
        <authorList>
            <person name="Bolotin A."/>
            <person name="Wincker P."/>
            <person name="Mauger S."/>
            <person name="Jaillon O."/>
            <person name="Malarme K."/>
            <person name="Weissenbach J."/>
            <person name="Ehrlich S.D."/>
            <person name="Sorokin A."/>
        </authorList>
    </citation>
    <scope>NUCLEOTIDE SEQUENCE [LARGE SCALE GENOMIC DNA]</scope>
    <source>
        <strain>IL1403</strain>
    </source>
</reference>
<organism>
    <name type="scientific">Lactococcus lactis subsp. lactis (strain IL1403)</name>
    <name type="common">Streptococcus lactis</name>
    <dbReference type="NCBI Taxonomy" id="272623"/>
    <lineage>
        <taxon>Bacteria</taxon>
        <taxon>Bacillati</taxon>
        <taxon>Bacillota</taxon>
        <taxon>Bacilli</taxon>
        <taxon>Lactobacillales</taxon>
        <taxon>Streptococcaceae</taxon>
        <taxon>Lactococcus</taxon>
    </lineage>
</organism>
<dbReference type="EC" id="6.1.1.19" evidence="1"/>
<dbReference type="EMBL" id="AE005176">
    <property type="protein sequence ID" value="AAK06136.1"/>
    <property type="molecule type" value="Genomic_DNA"/>
</dbReference>
<dbReference type="PIR" id="F86879">
    <property type="entry name" value="F86879"/>
</dbReference>
<dbReference type="RefSeq" id="NP_268195.1">
    <property type="nucleotide sequence ID" value="NC_002662.1"/>
</dbReference>
<dbReference type="RefSeq" id="WP_010906279.1">
    <property type="nucleotide sequence ID" value="NC_002662.1"/>
</dbReference>
<dbReference type="SMR" id="Q9CE12"/>
<dbReference type="PaxDb" id="272623-L0344"/>
<dbReference type="EnsemblBacteria" id="AAK06136">
    <property type="protein sequence ID" value="AAK06136"/>
    <property type="gene ID" value="L0344"/>
</dbReference>
<dbReference type="GeneID" id="89634391"/>
<dbReference type="KEGG" id="lla:L0344"/>
<dbReference type="PATRIC" id="fig|272623.7.peg.2195"/>
<dbReference type="eggNOG" id="COG0018">
    <property type="taxonomic scope" value="Bacteria"/>
</dbReference>
<dbReference type="HOGENOM" id="CLU_006406_6_1_9"/>
<dbReference type="OrthoDB" id="9805987at2"/>
<dbReference type="Proteomes" id="UP000002196">
    <property type="component" value="Chromosome"/>
</dbReference>
<dbReference type="GO" id="GO:0005737">
    <property type="term" value="C:cytoplasm"/>
    <property type="evidence" value="ECO:0007669"/>
    <property type="project" value="UniProtKB-SubCell"/>
</dbReference>
<dbReference type="GO" id="GO:0004814">
    <property type="term" value="F:arginine-tRNA ligase activity"/>
    <property type="evidence" value="ECO:0007669"/>
    <property type="project" value="UniProtKB-UniRule"/>
</dbReference>
<dbReference type="GO" id="GO:0005524">
    <property type="term" value="F:ATP binding"/>
    <property type="evidence" value="ECO:0007669"/>
    <property type="project" value="UniProtKB-UniRule"/>
</dbReference>
<dbReference type="GO" id="GO:0006420">
    <property type="term" value="P:arginyl-tRNA aminoacylation"/>
    <property type="evidence" value="ECO:0007669"/>
    <property type="project" value="UniProtKB-UniRule"/>
</dbReference>
<dbReference type="CDD" id="cd07956">
    <property type="entry name" value="Anticodon_Ia_Arg"/>
    <property type="match status" value="1"/>
</dbReference>
<dbReference type="CDD" id="cd00671">
    <property type="entry name" value="ArgRS_core"/>
    <property type="match status" value="1"/>
</dbReference>
<dbReference type="FunFam" id="3.40.50.620:FF:000116">
    <property type="entry name" value="Arginine--tRNA ligase"/>
    <property type="match status" value="1"/>
</dbReference>
<dbReference type="FunFam" id="1.10.730.10:FF:000006">
    <property type="entry name" value="Arginyl-tRNA synthetase 2, mitochondrial"/>
    <property type="match status" value="1"/>
</dbReference>
<dbReference type="Gene3D" id="3.30.1360.70">
    <property type="entry name" value="Arginyl tRNA synthetase N-terminal domain"/>
    <property type="match status" value="1"/>
</dbReference>
<dbReference type="Gene3D" id="3.40.50.620">
    <property type="entry name" value="HUPs"/>
    <property type="match status" value="1"/>
</dbReference>
<dbReference type="Gene3D" id="1.10.730.10">
    <property type="entry name" value="Isoleucyl-tRNA Synthetase, Domain 1"/>
    <property type="match status" value="1"/>
</dbReference>
<dbReference type="HAMAP" id="MF_00123">
    <property type="entry name" value="Arg_tRNA_synth"/>
    <property type="match status" value="1"/>
</dbReference>
<dbReference type="InterPro" id="IPR001278">
    <property type="entry name" value="Arg-tRNA-ligase"/>
</dbReference>
<dbReference type="InterPro" id="IPR005148">
    <property type="entry name" value="Arg-tRNA-synth_N"/>
</dbReference>
<dbReference type="InterPro" id="IPR036695">
    <property type="entry name" value="Arg-tRNA-synth_N_sf"/>
</dbReference>
<dbReference type="InterPro" id="IPR035684">
    <property type="entry name" value="ArgRS_core"/>
</dbReference>
<dbReference type="InterPro" id="IPR008909">
    <property type="entry name" value="DALR_anticod-bd"/>
</dbReference>
<dbReference type="InterPro" id="IPR014729">
    <property type="entry name" value="Rossmann-like_a/b/a_fold"/>
</dbReference>
<dbReference type="InterPro" id="IPR009080">
    <property type="entry name" value="tRNAsynth_Ia_anticodon-bd"/>
</dbReference>
<dbReference type="NCBIfam" id="TIGR00456">
    <property type="entry name" value="argS"/>
    <property type="match status" value="1"/>
</dbReference>
<dbReference type="PANTHER" id="PTHR11956:SF5">
    <property type="entry name" value="ARGININE--TRNA LIGASE, CYTOPLASMIC"/>
    <property type="match status" value="1"/>
</dbReference>
<dbReference type="PANTHER" id="PTHR11956">
    <property type="entry name" value="ARGINYL-TRNA SYNTHETASE"/>
    <property type="match status" value="1"/>
</dbReference>
<dbReference type="Pfam" id="PF03485">
    <property type="entry name" value="Arg_tRNA_synt_N"/>
    <property type="match status" value="1"/>
</dbReference>
<dbReference type="Pfam" id="PF05746">
    <property type="entry name" value="DALR_1"/>
    <property type="match status" value="1"/>
</dbReference>
<dbReference type="Pfam" id="PF00750">
    <property type="entry name" value="tRNA-synt_1d"/>
    <property type="match status" value="1"/>
</dbReference>
<dbReference type="PRINTS" id="PR01038">
    <property type="entry name" value="TRNASYNTHARG"/>
</dbReference>
<dbReference type="SMART" id="SM01016">
    <property type="entry name" value="Arg_tRNA_synt_N"/>
    <property type="match status" value="1"/>
</dbReference>
<dbReference type="SMART" id="SM00836">
    <property type="entry name" value="DALR_1"/>
    <property type="match status" value="1"/>
</dbReference>
<dbReference type="SUPFAM" id="SSF47323">
    <property type="entry name" value="Anticodon-binding domain of a subclass of class I aminoacyl-tRNA synthetases"/>
    <property type="match status" value="1"/>
</dbReference>
<dbReference type="SUPFAM" id="SSF55190">
    <property type="entry name" value="Arginyl-tRNA synthetase (ArgRS), N-terminal 'additional' domain"/>
    <property type="match status" value="1"/>
</dbReference>
<dbReference type="SUPFAM" id="SSF52374">
    <property type="entry name" value="Nucleotidylyl transferase"/>
    <property type="match status" value="1"/>
</dbReference>
<feature type="chain" id="PRO_0000151567" description="Arginine--tRNA ligase">
    <location>
        <begin position="1"/>
        <end position="564"/>
    </location>
</feature>
<feature type="short sequence motif" description="'HIGH' region">
    <location>
        <begin position="122"/>
        <end position="132"/>
    </location>
</feature>
<evidence type="ECO:0000255" key="1">
    <source>
        <dbReference type="HAMAP-Rule" id="MF_00123"/>
    </source>
</evidence>
<name>SYR_LACLA</name>
<keyword id="KW-0030">Aminoacyl-tRNA synthetase</keyword>
<keyword id="KW-0067">ATP-binding</keyword>
<keyword id="KW-0963">Cytoplasm</keyword>
<keyword id="KW-0436">Ligase</keyword>
<keyword id="KW-0547">Nucleotide-binding</keyword>
<keyword id="KW-0648">Protein biosynthesis</keyword>
<keyword id="KW-1185">Reference proteome</keyword>
<comment type="catalytic activity">
    <reaction evidence="1">
        <text>tRNA(Arg) + L-arginine + ATP = L-arginyl-tRNA(Arg) + AMP + diphosphate</text>
        <dbReference type="Rhea" id="RHEA:20301"/>
        <dbReference type="Rhea" id="RHEA-COMP:9658"/>
        <dbReference type="Rhea" id="RHEA-COMP:9673"/>
        <dbReference type="ChEBI" id="CHEBI:30616"/>
        <dbReference type="ChEBI" id="CHEBI:32682"/>
        <dbReference type="ChEBI" id="CHEBI:33019"/>
        <dbReference type="ChEBI" id="CHEBI:78442"/>
        <dbReference type="ChEBI" id="CHEBI:78513"/>
        <dbReference type="ChEBI" id="CHEBI:456215"/>
        <dbReference type="EC" id="6.1.1.19"/>
    </reaction>
</comment>
<comment type="subunit">
    <text evidence="1">Monomer.</text>
</comment>
<comment type="subcellular location">
    <subcellularLocation>
        <location evidence="1">Cytoplasm</location>
    </subcellularLocation>
</comment>
<comment type="similarity">
    <text evidence="1">Belongs to the class-I aminoacyl-tRNA synthetase family.</text>
</comment>
<proteinExistence type="inferred from homology"/>
<accession>Q9CE12</accession>
<gene>
    <name evidence="1" type="primary">argS</name>
    <name type="ordered locus">LL2038</name>
    <name type="ORF">L0344</name>
</gene>
<protein>
    <recommendedName>
        <fullName evidence="1">Arginine--tRNA ligase</fullName>
        <ecNumber evidence="1">6.1.1.19</ecNumber>
    </recommendedName>
    <alternativeName>
        <fullName evidence="1">Arginyl-tRNA synthetase</fullName>
        <shortName evidence="1">ArgRS</shortName>
    </alternativeName>
</protein>
<sequence>MDEKQLVSQALSAAIDGVLGVEQIAAIIEKPKSSDLGDLAFPAFQLAKTLRKSPQIIAGEIAEKIDTKGFEKVIAVGPYVNFFLDKNATASEVIREVLTEGEHYGDANIGQGGNVPIDMSAPNIAKPFSIGHLRSTVIGDSIAKIYEKLGYQPIKINHLGDWGKQFGLLITAYKKYGDEATITANPIDELLKLYVKINAEAKEDPEVDEEGRQWFLKMEQGDEEALRIWKWFSDVSLIEFNRIYGKLGVSFDHFMGESFYSDKMDAIVEDLESKNLLHESKGALIVDLEKYNLNPALIKKTDGATLYITRDLATAAYRKKTFNFVKSLYVVGGEQTNHFKQLKAVLKEAGYDWSDDMVHVPFGMVTQGGKKFSTRKGHVVKLEMALDEAVDRAEKQIEAKNPNLENKEEVAKQVGVGAVKFYDLKTDRNNGYDFDLDEMVSFEGETGPYVQYAHARIQSILRKANRKVDINNISLAVSDAEAWEIVKALKEFPNVVKRAADNYEPSVIAKYAISLAQAFNKYYAHVRILEDDAQLDGRLALISATSIVLKEALRLLGVAAPENM</sequence>